<gene>
    <name evidence="1" type="primary">leuS</name>
    <name type="ordered locus">LL0816</name>
    <name type="ORF">L0352</name>
</gene>
<comment type="catalytic activity">
    <reaction evidence="1">
        <text>tRNA(Leu) + L-leucine + ATP = L-leucyl-tRNA(Leu) + AMP + diphosphate</text>
        <dbReference type="Rhea" id="RHEA:11688"/>
        <dbReference type="Rhea" id="RHEA-COMP:9613"/>
        <dbReference type="Rhea" id="RHEA-COMP:9622"/>
        <dbReference type="ChEBI" id="CHEBI:30616"/>
        <dbReference type="ChEBI" id="CHEBI:33019"/>
        <dbReference type="ChEBI" id="CHEBI:57427"/>
        <dbReference type="ChEBI" id="CHEBI:78442"/>
        <dbReference type="ChEBI" id="CHEBI:78494"/>
        <dbReference type="ChEBI" id="CHEBI:456215"/>
        <dbReference type="EC" id="6.1.1.4"/>
    </reaction>
</comment>
<comment type="subcellular location">
    <subcellularLocation>
        <location evidence="1">Cytoplasm</location>
    </subcellularLocation>
</comment>
<comment type="similarity">
    <text evidence="1">Belongs to the class-I aminoacyl-tRNA synthetase family.</text>
</comment>
<protein>
    <recommendedName>
        <fullName evidence="1">Leucine--tRNA ligase</fullName>
        <ecNumber evidence="1">6.1.1.4</ecNumber>
    </recommendedName>
    <alternativeName>
        <fullName evidence="1">Leucyl-tRNA synthetase</fullName>
        <shortName evidence="1">LeuRS</shortName>
    </alternativeName>
</protein>
<sequence>MEYNHQEIEAKWQKYWADNKTFRTGTDKNKPKFYALDMFPYPSGAGLHVGHPEGYTATDILSRYKRAQGFNVLHPMGWDAFGLPAEQYAMDTGNDPAEFTAENIANFKRQINSLGFSYDWEREVNTTDPNFYKWTQWIFTKLYEKGLAYEAEVAVNWVEELGTAIANEEVLPDGTSERGGYPVVRKPMRQWMLKITAYAERLLEDLEEVDWPESIKEMQRNWIGKSVGADVTFEVAGTDKSFEVFTTRPDTLFGATYAVLAPEHDLVDAITTPEQKEAVAEYRRKASLKSDLARTDLSKEKTGAFTGAYAINPINGRKMPIWVADYVLASYGHGAVMAVPAHDERDWEFAKVYGLEILPVVEGGNVEEAVYTEDGPHINSEFLNGLDKAQAIEKAIEFLEEKKIGKKKITYRLRDWLFSRQRYWGEPIPIIHWEDGTSTALSEDELPLVLPVTSDIKPSGTGESPLANLTDWLEVTRADGLKGRRETNTMPQWAGSSWYYLRYIDPNNSEALADPELLKEWLPVDIYVGGAEHAVLHLLYARFWHKVLYDLGVVPTKEPFQKLFNQGMILGTSYRDHRGALVATDKVEKRDGGFYHMETGEALEQAPAKMSKSLKNVVNPDDVVEHYGADTLRVYEMFMGPLDASIPWSEEGLEGARKFLDRAVRMIENSEIKAENNGELDKVYNETVKNVTERLDLMYFNTAISQLMIFVNAVNKAKALPLEYANGFVQLLAPFAPHIAEELWVKLGNEAGISYVAWPTFDESKLIESEVEIVVQINGKLKAKIKIAKDLAREELEKIGRESVAEALEGKNVVKVIAVPNKLVNIVVK</sequence>
<feature type="chain" id="PRO_0000152029" description="Leucine--tRNA ligase">
    <location>
        <begin position="1"/>
        <end position="829"/>
    </location>
</feature>
<feature type="short sequence motif" description="'HIGH' region">
    <location>
        <begin position="40"/>
        <end position="51"/>
    </location>
</feature>
<feature type="short sequence motif" description="'KMSKS' region">
    <location>
        <begin position="609"/>
        <end position="613"/>
    </location>
</feature>
<feature type="binding site" evidence="1">
    <location>
        <position position="612"/>
    </location>
    <ligand>
        <name>ATP</name>
        <dbReference type="ChEBI" id="CHEBI:30616"/>
    </ligand>
</feature>
<name>SYL_LACLA</name>
<evidence type="ECO:0000255" key="1">
    <source>
        <dbReference type="HAMAP-Rule" id="MF_00049"/>
    </source>
</evidence>
<accession>Q9CHB6</accession>
<keyword id="KW-0030">Aminoacyl-tRNA synthetase</keyword>
<keyword id="KW-0067">ATP-binding</keyword>
<keyword id="KW-0963">Cytoplasm</keyword>
<keyword id="KW-0436">Ligase</keyword>
<keyword id="KW-0547">Nucleotide-binding</keyword>
<keyword id="KW-0648">Protein biosynthesis</keyword>
<keyword id="KW-1185">Reference proteome</keyword>
<dbReference type="EC" id="6.1.1.4" evidence="1"/>
<dbReference type="EMBL" id="AE005176">
    <property type="protein sequence ID" value="AAK04914.1"/>
    <property type="molecule type" value="Genomic_DNA"/>
</dbReference>
<dbReference type="PIR" id="H86726">
    <property type="entry name" value="H86726"/>
</dbReference>
<dbReference type="RefSeq" id="NP_266972.1">
    <property type="nucleotide sequence ID" value="NC_002662.1"/>
</dbReference>
<dbReference type="RefSeq" id="WP_003132571.1">
    <property type="nucleotide sequence ID" value="NC_002662.1"/>
</dbReference>
<dbReference type="SMR" id="Q9CHB6"/>
<dbReference type="PaxDb" id="272623-L0352"/>
<dbReference type="EnsemblBacteria" id="AAK04914">
    <property type="protein sequence ID" value="AAK04914"/>
    <property type="gene ID" value="L0352"/>
</dbReference>
<dbReference type="GeneID" id="89632947"/>
<dbReference type="KEGG" id="lla:L0352"/>
<dbReference type="PATRIC" id="fig|272623.7.peg.872"/>
<dbReference type="eggNOG" id="COG0495">
    <property type="taxonomic scope" value="Bacteria"/>
</dbReference>
<dbReference type="HOGENOM" id="CLU_004427_0_0_9"/>
<dbReference type="OrthoDB" id="9810365at2"/>
<dbReference type="Proteomes" id="UP000002196">
    <property type="component" value="Chromosome"/>
</dbReference>
<dbReference type="GO" id="GO:0005829">
    <property type="term" value="C:cytosol"/>
    <property type="evidence" value="ECO:0007669"/>
    <property type="project" value="TreeGrafter"/>
</dbReference>
<dbReference type="GO" id="GO:0002161">
    <property type="term" value="F:aminoacyl-tRNA deacylase activity"/>
    <property type="evidence" value="ECO:0007669"/>
    <property type="project" value="InterPro"/>
</dbReference>
<dbReference type="GO" id="GO:0005524">
    <property type="term" value="F:ATP binding"/>
    <property type="evidence" value="ECO:0007669"/>
    <property type="project" value="UniProtKB-UniRule"/>
</dbReference>
<dbReference type="GO" id="GO:0004823">
    <property type="term" value="F:leucine-tRNA ligase activity"/>
    <property type="evidence" value="ECO:0007669"/>
    <property type="project" value="UniProtKB-UniRule"/>
</dbReference>
<dbReference type="GO" id="GO:0006429">
    <property type="term" value="P:leucyl-tRNA aminoacylation"/>
    <property type="evidence" value="ECO:0007669"/>
    <property type="project" value="UniProtKB-UniRule"/>
</dbReference>
<dbReference type="CDD" id="cd07958">
    <property type="entry name" value="Anticodon_Ia_Leu_BEm"/>
    <property type="match status" value="1"/>
</dbReference>
<dbReference type="CDD" id="cd00812">
    <property type="entry name" value="LeuRS_core"/>
    <property type="match status" value="1"/>
</dbReference>
<dbReference type="FunFam" id="1.10.730.10:FF:000012">
    <property type="entry name" value="Leucine--tRNA ligase"/>
    <property type="match status" value="1"/>
</dbReference>
<dbReference type="FunFam" id="3.40.50.620:FF:000056">
    <property type="entry name" value="Leucine--tRNA ligase"/>
    <property type="match status" value="1"/>
</dbReference>
<dbReference type="FunFam" id="3.40.50.620:FF:000077">
    <property type="entry name" value="Leucine--tRNA ligase"/>
    <property type="match status" value="1"/>
</dbReference>
<dbReference type="FunFam" id="1.10.730.10:FF:000011">
    <property type="entry name" value="Leucine--tRNA ligase chloroplastic/mitochondrial"/>
    <property type="match status" value="1"/>
</dbReference>
<dbReference type="Gene3D" id="3.40.50.620">
    <property type="entry name" value="HUPs"/>
    <property type="match status" value="2"/>
</dbReference>
<dbReference type="Gene3D" id="1.10.730.10">
    <property type="entry name" value="Isoleucyl-tRNA Synthetase, Domain 1"/>
    <property type="match status" value="1"/>
</dbReference>
<dbReference type="HAMAP" id="MF_00049_B">
    <property type="entry name" value="Leu_tRNA_synth_B"/>
    <property type="match status" value="1"/>
</dbReference>
<dbReference type="InterPro" id="IPR001412">
    <property type="entry name" value="aa-tRNA-synth_I_CS"/>
</dbReference>
<dbReference type="InterPro" id="IPR002300">
    <property type="entry name" value="aa-tRNA-synth_Ia"/>
</dbReference>
<dbReference type="InterPro" id="IPR002302">
    <property type="entry name" value="Leu-tRNA-ligase"/>
</dbReference>
<dbReference type="InterPro" id="IPR025709">
    <property type="entry name" value="Leu_tRNA-synth_edit"/>
</dbReference>
<dbReference type="InterPro" id="IPR013155">
    <property type="entry name" value="M/V/L/I-tRNA-synth_anticd-bd"/>
</dbReference>
<dbReference type="InterPro" id="IPR015413">
    <property type="entry name" value="Methionyl/Leucyl_tRNA_Synth"/>
</dbReference>
<dbReference type="InterPro" id="IPR014729">
    <property type="entry name" value="Rossmann-like_a/b/a_fold"/>
</dbReference>
<dbReference type="InterPro" id="IPR009080">
    <property type="entry name" value="tRNAsynth_Ia_anticodon-bd"/>
</dbReference>
<dbReference type="InterPro" id="IPR009008">
    <property type="entry name" value="Val/Leu/Ile-tRNA-synth_edit"/>
</dbReference>
<dbReference type="NCBIfam" id="TIGR00396">
    <property type="entry name" value="leuS_bact"/>
    <property type="match status" value="1"/>
</dbReference>
<dbReference type="PANTHER" id="PTHR43740:SF2">
    <property type="entry name" value="LEUCINE--TRNA LIGASE, MITOCHONDRIAL"/>
    <property type="match status" value="1"/>
</dbReference>
<dbReference type="PANTHER" id="PTHR43740">
    <property type="entry name" value="LEUCYL-TRNA SYNTHETASE"/>
    <property type="match status" value="1"/>
</dbReference>
<dbReference type="Pfam" id="PF08264">
    <property type="entry name" value="Anticodon_1"/>
    <property type="match status" value="1"/>
</dbReference>
<dbReference type="Pfam" id="PF00133">
    <property type="entry name" value="tRNA-synt_1"/>
    <property type="match status" value="2"/>
</dbReference>
<dbReference type="Pfam" id="PF13603">
    <property type="entry name" value="tRNA-synt_1_2"/>
    <property type="match status" value="1"/>
</dbReference>
<dbReference type="Pfam" id="PF09334">
    <property type="entry name" value="tRNA-synt_1g"/>
    <property type="match status" value="1"/>
</dbReference>
<dbReference type="PRINTS" id="PR00985">
    <property type="entry name" value="TRNASYNTHLEU"/>
</dbReference>
<dbReference type="SUPFAM" id="SSF47323">
    <property type="entry name" value="Anticodon-binding domain of a subclass of class I aminoacyl-tRNA synthetases"/>
    <property type="match status" value="1"/>
</dbReference>
<dbReference type="SUPFAM" id="SSF52374">
    <property type="entry name" value="Nucleotidylyl transferase"/>
    <property type="match status" value="1"/>
</dbReference>
<dbReference type="SUPFAM" id="SSF50677">
    <property type="entry name" value="ValRS/IleRS/LeuRS editing domain"/>
    <property type="match status" value="1"/>
</dbReference>
<dbReference type="PROSITE" id="PS00178">
    <property type="entry name" value="AA_TRNA_LIGASE_I"/>
    <property type="match status" value="1"/>
</dbReference>
<proteinExistence type="inferred from homology"/>
<organism>
    <name type="scientific">Lactococcus lactis subsp. lactis (strain IL1403)</name>
    <name type="common">Streptococcus lactis</name>
    <dbReference type="NCBI Taxonomy" id="272623"/>
    <lineage>
        <taxon>Bacteria</taxon>
        <taxon>Bacillati</taxon>
        <taxon>Bacillota</taxon>
        <taxon>Bacilli</taxon>
        <taxon>Lactobacillales</taxon>
        <taxon>Streptococcaceae</taxon>
        <taxon>Lactococcus</taxon>
    </lineage>
</organism>
<reference key="1">
    <citation type="journal article" date="2001" name="Genome Res.">
        <title>The complete genome sequence of the lactic acid bacterium Lactococcus lactis ssp. lactis IL1403.</title>
        <authorList>
            <person name="Bolotin A."/>
            <person name="Wincker P."/>
            <person name="Mauger S."/>
            <person name="Jaillon O."/>
            <person name="Malarme K."/>
            <person name="Weissenbach J."/>
            <person name="Ehrlich S.D."/>
            <person name="Sorokin A."/>
        </authorList>
    </citation>
    <scope>NUCLEOTIDE SEQUENCE [LARGE SCALE GENOMIC DNA]</scope>
    <source>
        <strain>IL1403</strain>
    </source>
</reference>